<comment type="function">
    <text evidence="1">Transcriptional regulator that specifically binds 5'-GATA-3' or 5'-GAT-3' motifs within gene promoters.</text>
</comment>
<comment type="subcellular location">
    <subcellularLocation>
        <location evidence="3">Nucleus</location>
    </subcellularLocation>
</comment>
<comment type="similarity">
    <text evidence="3">Belongs to the type IV zinc-finger family. Class B subfamily.</text>
</comment>
<name>GAT29_ARATH</name>
<organism>
    <name type="scientific">Arabidopsis thaliana</name>
    <name type="common">Mouse-ear cress</name>
    <dbReference type="NCBI Taxonomy" id="3702"/>
    <lineage>
        <taxon>Eukaryota</taxon>
        <taxon>Viridiplantae</taxon>
        <taxon>Streptophyta</taxon>
        <taxon>Embryophyta</taxon>
        <taxon>Tracheophyta</taxon>
        <taxon>Spermatophyta</taxon>
        <taxon>Magnoliopsida</taxon>
        <taxon>eudicotyledons</taxon>
        <taxon>Gunneridae</taxon>
        <taxon>Pentapetalae</taxon>
        <taxon>rosids</taxon>
        <taxon>malvids</taxon>
        <taxon>Brassicales</taxon>
        <taxon>Brassicaceae</taxon>
        <taxon>Camelineae</taxon>
        <taxon>Arabidopsis</taxon>
    </lineage>
</organism>
<reference key="1">
    <citation type="journal article" date="2000" name="DNA Res.">
        <title>Structural analysis of Arabidopsis thaliana chromosome 3. I. Sequence features of the regions of 4,504,864 bp covered by sixty P1 and TAC clones.</title>
        <authorList>
            <person name="Sato S."/>
            <person name="Nakamura Y."/>
            <person name="Kaneko T."/>
            <person name="Katoh T."/>
            <person name="Asamizu E."/>
            <person name="Tabata S."/>
        </authorList>
    </citation>
    <scope>NUCLEOTIDE SEQUENCE [LARGE SCALE GENOMIC DNA]</scope>
    <source>
        <strain>cv. Columbia</strain>
    </source>
</reference>
<reference key="2">
    <citation type="journal article" date="2017" name="Plant J.">
        <title>Araport11: a complete reannotation of the Arabidopsis thaliana reference genome.</title>
        <authorList>
            <person name="Cheng C.Y."/>
            <person name="Krishnakumar V."/>
            <person name="Chan A.P."/>
            <person name="Thibaud-Nissen F."/>
            <person name="Schobel S."/>
            <person name="Town C.D."/>
        </authorList>
    </citation>
    <scope>GENOME REANNOTATION</scope>
    <source>
        <strain>cv. Columbia</strain>
    </source>
</reference>
<reference key="3">
    <citation type="submission" date="2009-03" db="EMBL/GenBank/DDBJ databases">
        <title>ORF cloning and analysis of Arabidopsis transcription factor genes.</title>
        <authorList>
            <person name="Fujita M."/>
            <person name="Mizukado S."/>
            <person name="Seki M."/>
            <person name="Shinozaki K."/>
            <person name="Mitsuda N."/>
            <person name="Takiguchi Y."/>
            <person name="Takagi M."/>
        </authorList>
    </citation>
    <scope>NUCLEOTIDE SEQUENCE [LARGE SCALE MRNA]</scope>
</reference>
<reference key="4">
    <citation type="journal article" date="2004" name="Plant Physiol.">
        <title>The GATA family of transcription factors in Arabidopsis and rice.</title>
        <authorList>
            <person name="Reyes J.C."/>
            <person name="Muro-Pastor M.I."/>
            <person name="Florencio F.J."/>
        </authorList>
    </citation>
    <scope>GENE FAMILY ORGANIZATION</scope>
</reference>
<protein>
    <recommendedName>
        <fullName>GATA transcription factor 29</fullName>
    </recommendedName>
</protein>
<evidence type="ECO:0000250" key="1"/>
<evidence type="ECO:0000255" key="2">
    <source>
        <dbReference type="PROSITE-ProRule" id="PRU00094"/>
    </source>
</evidence>
<evidence type="ECO:0000305" key="3"/>
<dbReference type="EMBL" id="AB025629">
    <property type="protein sequence ID" value="BAB02483.1"/>
    <property type="molecule type" value="Genomic_DNA"/>
</dbReference>
<dbReference type="EMBL" id="CP002686">
    <property type="protein sequence ID" value="AEE76419.1"/>
    <property type="molecule type" value="Genomic_DNA"/>
</dbReference>
<dbReference type="EMBL" id="AB493625">
    <property type="protein sequence ID" value="BAH30463.1"/>
    <property type="molecule type" value="mRNA"/>
</dbReference>
<dbReference type="RefSeq" id="NP_188711.1">
    <property type="nucleotide sequence ID" value="NM_112966.2"/>
</dbReference>
<dbReference type="SMR" id="Q9LT45"/>
<dbReference type="STRING" id="3702.Q9LT45"/>
<dbReference type="iPTMnet" id="Q9LT45"/>
<dbReference type="PaxDb" id="3702-AT3G20750.1"/>
<dbReference type="EnsemblPlants" id="AT3G20750.1">
    <property type="protein sequence ID" value="AT3G20750.1"/>
    <property type="gene ID" value="AT3G20750"/>
</dbReference>
<dbReference type="GeneID" id="821623"/>
<dbReference type="Gramene" id="AT3G20750.1">
    <property type="protein sequence ID" value="AT3G20750.1"/>
    <property type="gene ID" value="AT3G20750"/>
</dbReference>
<dbReference type="KEGG" id="ath:AT3G20750"/>
<dbReference type="Araport" id="AT3G20750"/>
<dbReference type="TAIR" id="AT3G20750">
    <property type="gene designation" value="GATA29"/>
</dbReference>
<dbReference type="eggNOG" id="KOG1601">
    <property type="taxonomic scope" value="Eukaryota"/>
</dbReference>
<dbReference type="HOGENOM" id="CLU_1295951_0_0_1"/>
<dbReference type="InParanoid" id="Q9LT45"/>
<dbReference type="OMA" id="ENHERHT"/>
<dbReference type="OrthoDB" id="2162994at2759"/>
<dbReference type="PRO" id="PR:Q9LT45"/>
<dbReference type="Proteomes" id="UP000006548">
    <property type="component" value="Chromosome 3"/>
</dbReference>
<dbReference type="ExpressionAtlas" id="Q9LT45">
    <property type="expression patterns" value="baseline and differential"/>
</dbReference>
<dbReference type="GO" id="GO:0005634">
    <property type="term" value="C:nucleus"/>
    <property type="evidence" value="ECO:0007669"/>
    <property type="project" value="UniProtKB-SubCell"/>
</dbReference>
<dbReference type="GO" id="GO:0043565">
    <property type="term" value="F:sequence-specific DNA binding"/>
    <property type="evidence" value="ECO:0007669"/>
    <property type="project" value="InterPro"/>
</dbReference>
<dbReference type="GO" id="GO:0008270">
    <property type="term" value="F:zinc ion binding"/>
    <property type="evidence" value="ECO:0007669"/>
    <property type="project" value="UniProtKB-KW"/>
</dbReference>
<dbReference type="GO" id="GO:0006355">
    <property type="term" value="P:regulation of DNA-templated transcription"/>
    <property type="evidence" value="ECO:0007669"/>
    <property type="project" value="InterPro"/>
</dbReference>
<dbReference type="CDD" id="cd00202">
    <property type="entry name" value="ZnF_GATA"/>
    <property type="match status" value="1"/>
</dbReference>
<dbReference type="Gene3D" id="3.30.50.10">
    <property type="entry name" value="Erythroid Transcription Factor GATA-1, subunit A"/>
    <property type="match status" value="1"/>
</dbReference>
<dbReference type="InterPro" id="IPR000679">
    <property type="entry name" value="Znf_GATA"/>
</dbReference>
<dbReference type="InterPro" id="IPR013088">
    <property type="entry name" value="Znf_NHR/GATA"/>
</dbReference>
<dbReference type="PANTHER" id="PTHR47172:SF24">
    <property type="entry name" value="GATA ZINC FINGER DOMAIN-CONTAINING PROTEIN 14-RELATED"/>
    <property type="match status" value="1"/>
</dbReference>
<dbReference type="PANTHER" id="PTHR47172">
    <property type="entry name" value="OS01G0976800 PROTEIN"/>
    <property type="match status" value="1"/>
</dbReference>
<dbReference type="Pfam" id="PF00320">
    <property type="entry name" value="GATA"/>
    <property type="match status" value="1"/>
</dbReference>
<dbReference type="SMART" id="SM00401">
    <property type="entry name" value="ZnF_GATA"/>
    <property type="match status" value="1"/>
</dbReference>
<dbReference type="SUPFAM" id="SSF57716">
    <property type="entry name" value="Glucocorticoid receptor-like (DNA-binding domain)"/>
    <property type="match status" value="1"/>
</dbReference>
<dbReference type="PROSITE" id="PS50114">
    <property type="entry name" value="GATA_ZN_FINGER_2"/>
    <property type="match status" value="1"/>
</dbReference>
<sequence>MEPELDLTLKLGLPNSTVETHLTLSPPTTTTDQGTNVVDGGEVINHRRGLLGDDEVIHNEPTRNNVEFNIRIYNYVFQQFVGAPNTLNFAPYPMPPSPAPAPETPPVSDEYVLIDVPARRARRNNSTVMTNSWKENATPKRIRGCGGFCGGRIEGMKKCTNMNCNALNTPMWRRGPLGPKSLCNACGIKFRKEEERKAKRNVVIVLDD</sequence>
<gene>
    <name type="primary">GATA29</name>
    <name type="ordered locus">At3g20750</name>
    <name type="ORF">MOE17.6</name>
</gene>
<proteinExistence type="evidence at transcript level"/>
<keyword id="KW-0238">DNA-binding</keyword>
<keyword id="KW-0479">Metal-binding</keyword>
<keyword id="KW-0539">Nucleus</keyword>
<keyword id="KW-1185">Reference proteome</keyword>
<keyword id="KW-0804">Transcription</keyword>
<keyword id="KW-0805">Transcription regulation</keyword>
<keyword id="KW-0862">Zinc</keyword>
<keyword id="KW-0863">Zinc-finger</keyword>
<feature type="chain" id="PRO_0000083447" description="GATA transcription factor 29">
    <location>
        <begin position="1"/>
        <end position="208"/>
    </location>
</feature>
<feature type="zinc finger region" description="GATA-type; atypical" evidence="2">
    <location>
        <begin position="155"/>
        <end position="208"/>
    </location>
</feature>
<accession>Q9LT45</accession>
<accession>C0SVC2</accession>